<reference key="1">
    <citation type="journal article" date="2008" name="PLoS Genet.">
        <title>Genomic islands in the pathogenic filamentous fungus Aspergillus fumigatus.</title>
        <authorList>
            <person name="Fedorova N.D."/>
            <person name="Khaldi N."/>
            <person name="Joardar V.S."/>
            <person name="Maiti R."/>
            <person name="Amedeo P."/>
            <person name="Anderson M.J."/>
            <person name="Crabtree J."/>
            <person name="Silva J.C."/>
            <person name="Badger J.H."/>
            <person name="Albarraq A."/>
            <person name="Angiuoli S."/>
            <person name="Bussey H."/>
            <person name="Bowyer P."/>
            <person name="Cotty P.J."/>
            <person name="Dyer P.S."/>
            <person name="Egan A."/>
            <person name="Galens K."/>
            <person name="Fraser-Liggett C.M."/>
            <person name="Haas B.J."/>
            <person name="Inman J.M."/>
            <person name="Kent R."/>
            <person name="Lemieux S."/>
            <person name="Malavazi I."/>
            <person name="Orvis J."/>
            <person name="Roemer T."/>
            <person name="Ronning C.M."/>
            <person name="Sundaram J.P."/>
            <person name="Sutton G."/>
            <person name="Turner G."/>
            <person name="Venter J.C."/>
            <person name="White O.R."/>
            <person name="Whitty B.R."/>
            <person name="Youngman P."/>
            <person name="Wolfe K.H."/>
            <person name="Goldman G.H."/>
            <person name="Wortman J.R."/>
            <person name="Jiang B."/>
            <person name="Denning D.W."/>
            <person name="Nierman W.C."/>
        </authorList>
    </citation>
    <scope>NUCLEOTIDE SEQUENCE [LARGE SCALE GENOMIC DNA]</scope>
    <source>
        <strain>ATCC 1020 / DSM 3700 / CBS 544.65 / FGSC A1164 / JCM 1740 / NRRL 181 / WB 181</strain>
    </source>
</reference>
<comment type="function">
    <text evidence="1">Involved in the initiation of assembly of the COPII coat required for the formation of transport vesicles from the endoplasmic reticulum (ER) and the selection of cargo molecules. Also involved in autophagy (By similarity).</text>
</comment>
<comment type="subcellular location">
    <subcellularLocation>
        <location evidence="1">Endoplasmic reticulum membrane</location>
        <topology evidence="1">Peripheral membrane protein</topology>
        <orientation evidence="1">Cytoplasmic side</orientation>
    </subcellularLocation>
</comment>
<comment type="similarity">
    <text evidence="3">Belongs to the SEC16 family.</text>
</comment>
<name>SEC16_NEOFI</name>
<keyword id="KW-0072">Autophagy</keyword>
<keyword id="KW-0256">Endoplasmic reticulum</keyword>
<keyword id="KW-0931">ER-Golgi transport</keyword>
<keyword id="KW-0472">Membrane</keyword>
<keyword id="KW-0653">Protein transport</keyword>
<keyword id="KW-1185">Reference proteome</keyword>
<keyword id="KW-0813">Transport</keyword>
<gene>
    <name type="primary">sec16</name>
    <name type="ORF">NFIA_050490</name>
</gene>
<protein>
    <recommendedName>
        <fullName>COPII coat assembly protein sec16</fullName>
    </recommendedName>
    <alternativeName>
        <fullName>Protein transport protein sec16</fullName>
    </alternativeName>
</protein>
<sequence length="1835" mass="195066">MAQPEGVLAWNPAFRPEDNDSVATDLARLALDSKKEVSETTDLDTHASPSAEEVTEENGPIEFKAAISADTGDQGAPDFVDSNMPAADDSSKPDIEEPEEPSCDESISMQTDEPRAVEDVTENVPTENGNVDITSGLRLEEHVAEEPHYGVPENSTGLASQNDAQDLFEGADTAWMDEAEGEENGATVNGEASDTRPGFWDNLGDNERDNEDDFFNQLKTQTKPIYSPPETESRFEEGIPLLGHGAATQNDHAQKGESQLDDVFGGDEDDESGFFSEIQKPTSAEGPSHITRKSTSQVIDSLNAVSDSPFSEPSPTAVEFNNGLTVPTADGEIKKAPSEEDLAARWQAELSDDADETMPTEDDLAARWQAELDDDDDDLLLDYDTTNAQGPPEAANIDHMNDSSILQSPFGTPENPARPKMQPVSYTPHQPSTSGLLSGIPAQNTAAQPTNASMSSYFSAQAPPNPVTTRAESFAERSKEGYKSPYDLPEDLARPRRAVASSRTVVAQPGTVPQPPPRSSSIPAPPLKASTVPPAPLGTSSAAPTAPQKNFFEELPLPPPRPKSRPASSGRYTPNATVCAPSVPQSIPPPANPYSNVPGAPQSNIGPPNPPQLQQPERLDPYSNLLAPNVPSAPAVPSTASRYSPRPPGLQAGVKPPPSPRYSPAPPQSTNAAAAAPPRNRYASQPASISGQGAALQFQPRTSSPLAYHEKIHYQDQGQSEERPQLQPTAIPPPLNHSHPSEQPVSSENKGPSSADVLENMPPVSTRPQSPPKNPYAPSAYTSEFAKRAAPVSTGPPIAGMTGVLNPSTEESPFVPPRRSQTQSPSQTLSPRLSVPSLDPFQRPASVHGSTSPTRTVNPYAPAPVPTHNRAPSQVLEFIPPTDGQQLDSLERWKGAPIFKFGFGGAVISCFPKHIPRYSAGQAAPMIKSCPGEVRVSQLNDWLPAAEGIVQHPGPLKGKSKKKDLVAWLSSKIAAFENADIPDFDRLSPDATKRREEKTLLWKVIRVLVENDGVLEGSVEAQKSLRNLLFPNLQDSVPNQSLGDGFTPSTTLQPLNAPSQPDAVDPRSVDSLRDTLVLGEREKAVWAAVDKRLWGHAMIIASTMDRSVWQQVVQEFVRREVRSATSRTESLAAFYEILAGNVEESIDELVPPSARAGLQMISKVDGHGTAKNSLDGLDSWRETLGLVLSNRSPDDQRALVALGRLLLSYNRTEAAHICFILSRAAVFGGVDDPLANIVLLGVDHQRLASSAALYDDDSILLTEAYEFATSVLAGSSVSTLPHLLAFKLIHAWSLADRGRKSEAQQYCDAIAAALKATTKPSGYHNQHLFFGVDELSARLRETTSDGGSSWISRPSMEKVSGSMWAKFNSFVAGDDSDAASTGSGKAEEIGPFARVSGTPTISRSPSVSDIYGSYPVAAAQPLPGTGPSRYQPVSHYAPSASPEQLRGRSSMDSQRSSSFGYPLGQRRGSQEPSTPVDTNMFHGMPMYGSPPVAGYQSTPPQSSYMPLAPVAEDSASGAQQGPFSAYSQVSDSAPSHRPSAYAPEPFGHPFDTQGVSTTSQPDQGGYMPPASTGAYEPPSVESNTEPADGVRDESTEEDKPKKKSFMDEDDDEDLAARAAAIQKAERARRDREADEAFRKAAEADAKKPPPATEKKGWFSGWFGGKKDDNSGGGPIRAKLGEENSFYYDTELKKWVNKKDPGSAAPTRGTPPPPKGSAPPSRSMSGSGGPPPAMATPPPTGASGSRPSSSAGAPPSVSASPAPPSLGAPPPAIPRSVSTGAVLPTPPSSSAGAPPRPATSLSNASSIDDLLGAPQARKGPAARGKKKGRYVDVMAK</sequence>
<dbReference type="EMBL" id="DS027698">
    <property type="protein sequence ID" value="EAW15704.1"/>
    <property type="molecule type" value="Genomic_DNA"/>
</dbReference>
<dbReference type="RefSeq" id="XP_001257601.1">
    <property type="nucleotide sequence ID" value="XM_001257600.1"/>
</dbReference>
<dbReference type="STRING" id="331117.A1DLN3"/>
<dbReference type="EnsemblFungi" id="EAW15704">
    <property type="protein sequence ID" value="EAW15704"/>
    <property type="gene ID" value="NFIA_050490"/>
</dbReference>
<dbReference type="GeneID" id="4584116"/>
<dbReference type="KEGG" id="nfi:NFIA_050490"/>
<dbReference type="VEuPathDB" id="FungiDB:NFIA_050490"/>
<dbReference type="eggNOG" id="KOG1913">
    <property type="taxonomic scope" value="Eukaryota"/>
</dbReference>
<dbReference type="HOGENOM" id="CLU_001147_0_0_1"/>
<dbReference type="OMA" id="YKSPYDL"/>
<dbReference type="OrthoDB" id="8918678at2759"/>
<dbReference type="Proteomes" id="UP000006702">
    <property type="component" value="Unassembled WGS sequence"/>
</dbReference>
<dbReference type="GO" id="GO:0070971">
    <property type="term" value="C:endoplasmic reticulum exit site"/>
    <property type="evidence" value="ECO:0007669"/>
    <property type="project" value="UniProtKB-ARBA"/>
</dbReference>
<dbReference type="GO" id="GO:0005789">
    <property type="term" value="C:endoplasmic reticulum membrane"/>
    <property type="evidence" value="ECO:0007669"/>
    <property type="project" value="UniProtKB-SubCell"/>
</dbReference>
<dbReference type="GO" id="GO:0012507">
    <property type="term" value="C:ER to Golgi transport vesicle membrane"/>
    <property type="evidence" value="ECO:0007669"/>
    <property type="project" value="TreeGrafter"/>
</dbReference>
<dbReference type="GO" id="GO:0006914">
    <property type="term" value="P:autophagy"/>
    <property type="evidence" value="ECO:0007669"/>
    <property type="project" value="UniProtKB-KW"/>
</dbReference>
<dbReference type="GO" id="GO:0007030">
    <property type="term" value="P:Golgi organization"/>
    <property type="evidence" value="ECO:0007669"/>
    <property type="project" value="TreeGrafter"/>
</dbReference>
<dbReference type="GO" id="GO:0046907">
    <property type="term" value="P:intracellular transport"/>
    <property type="evidence" value="ECO:0007669"/>
    <property type="project" value="UniProtKB-ARBA"/>
</dbReference>
<dbReference type="GO" id="GO:0070973">
    <property type="term" value="P:protein localization to endoplasmic reticulum exit site"/>
    <property type="evidence" value="ECO:0007669"/>
    <property type="project" value="TreeGrafter"/>
</dbReference>
<dbReference type="GO" id="GO:0015031">
    <property type="term" value="P:protein transport"/>
    <property type="evidence" value="ECO:0007669"/>
    <property type="project" value="UniProtKB-KW"/>
</dbReference>
<dbReference type="GO" id="GO:0016192">
    <property type="term" value="P:vesicle-mediated transport"/>
    <property type="evidence" value="ECO:0007669"/>
    <property type="project" value="UniProtKB-KW"/>
</dbReference>
<dbReference type="CDD" id="cd09233">
    <property type="entry name" value="ACE1-Sec16-like"/>
    <property type="match status" value="1"/>
</dbReference>
<dbReference type="FunFam" id="1.25.40.1030:FF:000008">
    <property type="entry name" value="Protein transport protein sec16"/>
    <property type="match status" value="1"/>
</dbReference>
<dbReference type="Gene3D" id="1.25.40.1030">
    <property type="match status" value="1"/>
</dbReference>
<dbReference type="InterPro" id="IPR024340">
    <property type="entry name" value="Sec16_CCD"/>
</dbReference>
<dbReference type="InterPro" id="IPR024468">
    <property type="entry name" value="Sec16_N"/>
</dbReference>
<dbReference type="InterPro" id="IPR024298">
    <property type="entry name" value="Sec16_Sec23-bd"/>
</dbReference>
<dbReference type="PANTHER" id="PTHR13402">
    <property type="entry name" value="RGPR-RELATED"/>
    <property type="match status" value="1"/>
</dbReference>
<dbReference type="PANTHER" id="PTHR13402:SF6">
    <property type="entry name" value="SECRETORY 16, ISOFORM I"/>
    <property type="match status" value="1"/>
</dbReference>
<dbReference type="Pfam" id="PF12932">
    <property type="entry name" value="Sec16"/>
    <property type="match status" value="1"/>
</dbReference>
<dbReference type="Pfam" id="PF12935">
    <property type="entry name" value="Sec16_N"/>
    <property type="match status" value="1"/>
</dbReference>
<dbReference type="Pfam" id="PF12931">
    <property type="entry name" value="TPR_Sec16"/>
    <property type="match status" value="1"/>
</dbReference>
<accession>A1DLN3</accession>
<proteinExistence type="inferred from homology"/>
<organism>
    <name type="scientific">Neosartorya fischeri (strain ATCC 1020 / DSM 3700 / CBS 544.65 / FGSC A1164 / JCM 1740 / NRRL 181 / WB 181)</name>
    <name type="common">Aspergillus fischerianus</name>
    <dbReference type="NCBI Taxonomy" id="331117"/>
    <lineage>
        <taxon>Eukaryota</taxon>
        <taxon>Fungi</taxon>
        <taxon>Dikarya</taxon>
        <taxon>Ascomycota</taxon>
        <taxon>Pezizomycotina</taxon>
        <taxon>Eurotiomycetes</taxon>
        <taxon>Eurotiomycetidae</taxon>
        <taxon>Eurotiales</taxon>
        <taxon>Aspergillaceae</taxon>
        <taxon>Aspergillus</taxon>
        <taxon>Aspergillus subgen. Fumigati</taxon>
    </lineage>
</organism>
<evidence type="ECO:0000250" key="1"/>
<evidence type="ECO:0000256" key="2">
    <source>
        <dbReference type="SAM" id="MobiDB-lite"/>
    </source>
</evidence>
<evidence type="ECO:0000305" key="3"/>
<feature type="chain" id="PRO_0000295539" description="COPII coat assembly protein sec16">
    <location>
        <begin position="1"/>
        <end position="1835"/>
    </location>
</feature>
<feature type="region of interest" description="Disordered" evidence="2">
    <location>
        <begin position="33"/>
        <end position="295"/>
    </location>
</feature>
<feature type="region of interest" description="Disordered" evidence="2">
    <location>
        <begin position="378"/>
        <end position="866"/>
    </location>
</feature>
<feature type="region of interest" description="Disordered" evidence="2">
    <location>
        <begin position="1040"/>
        <end position="1068"/>
    </location>
</feature>
<feature type="region of interest" description="Disordered" evidence="2">
    <location>
        <begin position="1376"/>
        <end position="1404"/>
    </location>
</feature>
<feature type="region of interest" description="Disordered" evidence="2">
    <location>
        <begin position="1422"/>
        <end position="1485"/>
    </location>
</feature>
<feature type="region of interest" description="Disordered" evidence="2">
    <location>
        <begin position="1512"/>
        <end position="1682"/>
    </location>
</feature>
<feature type="region of interest" description="Disordered" evidence="2">
    <location>
        <begin position="1695"/>
        <end position="1835"/>
    </location>
</feature>
<feature type="compositionally biased region" description="Polar residues" evidence="2">
    <location>
        <begin position="123"/>
        <end position="133"/>
    </location>
</feature>
<feature type="compositionally biased region" description="Basic and acidic residues" evidence="2">
    <location>
        <begin position="138"/>
        <end position="148"/>
    </location>
</feature>
<feature type="compositionally biased region" description="Polar residues" evidence="2">
    <location>
        <begin position="153"/>
        <end position="164"/>
    </location>
</feature>
<feature type="compositionally biased region" description="Polar residues" evidence="2">
    <location>
        <begin position="424"/>
        <end position="459"/>
    </location>
</feature>
<feature type="compositionally biased region" description="Basic and acidic residues" evidence="2">
    <location>
        <begin position="473"/>
        <end position="482"/>
    </location>
</feature>
<feature type="compositionally biased region" description="Pro residues" evidence="2">
    <location>
        <begin position="512"/>
        <end position="526"/>
    </location>
</feature>
<feature type="compositionally biased region" description="Low complexity" evidence="2">
    <location>
        <begin position="624"/>
        <end position="638"/>
    </location>
</feature>
<feature type="compositionally biased region" description="Pro residues" evidence="2">
    <location>
        <begin position="655"/>
        <end position="667"/>
    </location>
</feature>
<feature type="compositionally biased region" description="Low complexity" evidence="2">
    <location>
        <begin position="668"/>
        <end position="678"/>
    </location>
</feature>
<feature type="compositionally biased region" description="Polar residues" evidence="2">
    <location>
        <begin position="682"/>
        <end position="691"/>
    </location>
</feature>
<feature type="compositionally biased region" description="Basic and acidic residues" evidence="2">
    <location>
        <begin position="708"/>
        <end position="724"/>
    </location>
</feature>
<feature type="compositionally biased region" description="Polar residues" evidence="2">
    <location>
        <begin position="741"/>
        <end position="752"/>
    </location>
</feature>
<feature type="compositionally biased region" description="Low complexity" evidence="2">
    <location>
        <begin position="817"/>
        <end position="832"/>
    </location>
</feature>
<feature type="compositionally biased region" description="Polar residues" evidence="2">
    <location>
        <begin position="848"/>
        <end position="857"/>
    </location>
</feature>
<feature type="compositionally biased region" description="Polar residues" evidence="2">
    <location>
        <begin position="1040"/>
        <end position="1059"/>
    </location>
</feature>
<feature type="compositionally biased region" description="Low complexity" evidence="2">
    <location>
        <begin position="1447"/>
        <end position="1458"/>
    </location>
</feature>
<feature type="compositionally biased region" description="Polar residues" evidence="2">
    <location>
        <begin position="1516"/>
        <end position="1533"/>
    </location>
</feature>
<feature type="compositionally biased region" description="Polar residues" evidence="2">
    <location>
        <begin position="1553"/>
        <end position="1562"/>
    </location>
</feature>
<feature type="compositionally biased region" description="Basic and acidic residues" evidence="2">
    <location>
        <begin position="1588"/>
        <end position="1606"/>
    </location>
</feature>
<feature type="compositionally biased region" description="Basic and acidic residues" evidence="2">
    <location>
        <begin position="1623"/>
        <end position="1656"/>
    </location>
</feature>
<feature type="compositionally biased region" description="Pro residues" evidence="2">
    <location>
        <begin position="1728"/>
        <end position="1739"/>
    </location>
</feature>
<feature type="compositionally biased region" description="Low complexity" evidence="2">
    <location>
        <begin position="1740"/>
        <end position="1759"/>
    </location>
</feature>
<feature type="compositionally biased region" description="Pro residues" evidence="2">
    <location>
        <begin position="1760"/>
        <end position="1772"/>
    </location>
</feature>